<proteinExistence type="evidence at protein level"/>
<sequence length="454" mass="49687">MSFVPGQENAGGRSSSGNRAGNGILKKTTWADQTERGPNNQNRGRRNQPKQTATTQPNSGSVVPHYSWFSGITQFQKGKEFQFAEGQGVPIANGIPASEQKGYWYRHNRRSFKTPDGQQKQLLPRWYFYYLGTGPHAGASYGDSIEGVFWVANSQADTNTRSDIVERDPSSHEAIPTRFAPGTVLPQGFYVEGSGRSAPASRSGSRSQSRGPNNRARSSSNQRQPASTVKPDMAEEIAALVLAKLGKDAGQPKQVTKQSAKEVRQKILNKPRQKRTPNKQCPVQQCFGKRGPNQNFGGSEMLKLGTSDPQFPILAELAPTVGAFFFGSKLELVKKNSGGADEPTKDVYELQYSGAVRFDSTLPGFETIMKVLNENLNAYQKDGGADVVSPKPQRKGRRQAQEKKDEVDNVSVAKPKSSVQRNVSRELTPEDRSLLAQILDDGVVPDGLEDDSNV</sequence>
<organismHost>
    <name type="scientific">Mus musculus</name>
    <name type="common">Mouse</name>
    <dbReference type="NCBI Taxonomy" id="10090"/>
</organismHost>
<gene>
    <name evidence="2" type="primary">N</name>
    <name type="ORF">7a</name>
</gene>
<keyword id="KW-0013">ADP-ribosylation</keyword>
<keyword id="KW-1040">Host Golgi apparatus</keyword>
<keyword id="KW-0597">Phosphoprotein</keyword>
<keyword id="KW-0687">Ribonucleoprotein</keyword>
<keyword id="KW-0694">RNA-binding</keyword>
<keyword id="KW-0804">Transcription</keyword>
<keyword id="KW-0805">Transcription regulation</keyword>
<keyword id="KW-0543">Viral nucleoprotein</keyword>
<keyword id="KW-0946">Virion</keyword>
<feature type="chain" id="PRO_0000106006" description="Nucleoprotein">
    <location>
        <begin position="1"/>
        <end position="454"/>
    </location>
</feature>
<feature type="domain" description="CoV N NTD" evidence="3">
    <location>
        <begin position="64"/>
        <end position="193"/>
    </location>
</feature>
<feature type="domain" description="CoV N CTD" evidence="4">
    <location>
        <begin position="260"/>
        <end position="383"/>
    </location>
</feature>
<feature type="region of interest" description="Disordered" evidence="5">
    <location>
        <begin position="1"/>
        <end position="62"/>
    </location>
</feature>
<feature type="region of interest" description="RNA-binding" evidence="2">
    <location>
        <begin position="56"/>
        <end position="197"/>
    </location>
</feature>
<feature type="region of interest" description="Disordered" evidence="5">
    <location>
        <begin position="160"/>
        <end position="179"/>
    </location>
</feature>
<feature type="region of interest" description="Disordered" evidence="5">
    <location>
        <begin position="186"/>
        <end position="230"/>
    </location>
</feature>
<feature type="region of interest" description="Dimerization" evidence="2">
    <location>
        <begin position="267"/>
        <end position="383"/>
    </location>
</feature>
<feature type="region of interest" description="Disordered" evidence="5">
    <location>
        <begin position="271"/>
        <end position="292"/>
    </location>
</feature>
<feature type="region of interest" description="Disordered" evidence="5">
    <location>
        <begin position="382"/>
        <end position="428"/>
    </location>
</feature>
<feature type="compositionally biased region" description="Low complexity" evidence="5">
    <location>
        <begin position="10"/>
        <end position="23"/>
    </location>
</feature>
<feature type="compositionally biased region" description="Polar residues" evidence="5">
    <location>
        <begin position="50"/>
        <end position="61"/>
    </location>
</feature>
<feature type="compositionally biased region" description="Low complexity" evidence="5">
    <location>
        <begin position="193"/>
        <end position="212"/>
    </location>
</feature>
<feature type="compositionally biased region" description="Polar residues" evidence="5">
    <location>
        <begin position="215"/>
        <end position="227"/>
    </location>
</feature>
<feature type="binding site" evidence="1">
    <location>
        <position position="109"/>
    </location>
    <ligand>
        <name>RNA</name>
        <dbReference type="ChEBI" id="CHEBI:33697"/>
    </ligand>
</feature>
<feature type="binding site" evidence="1">
    <location>
        <position position="125"/>
    </location>
    <ligand>
        <name>RNA</name>
        <dbReference type="ChEBI" id="CHEBI:33697"/>
    </ligand>
</feature>
<feature type="binding site" evidence="1">
    <location>
        <position position="167"/>
    </location>
    <ligand>
        <name>RNA</name>
        <dbReference type="ChEBI" id="CHEBI:33697"/>
    </ligand>
</feature>
<feature type="modified residue" description="Phosphoserine; by host" evidence="2">
    <location>
        <position position="162"/>
    </location>
</feature>
<feature type="modified residue" description="Phosphoserine; by host" evidence="2">
    <location>
        <position position="170"/>
    </location>
</feature>
<feature type="modified residue" description="Phosphothreonine; by host" evidence="2">
    <location>
        <position position="177"/>
    </location>
</feature>
<feature type="modified residue" description="Phosphoserine; by host" evidence="2">
    <location>
        <position position="194"/>
    </location>
</feature>
<feature type="modified residue" description="Phosphoserine; by host" evidence="2">
    <location>
        <position position="389"/>
    </location>
</feature>
<feature type="modified residue" description="Phosphoserine; by host" evidence="2">
    <location>
        <position position="424"/>
    </location>
</feature>
<feature type="modified residue" description="Phosphothreonine; by host" evidence="2">
    <location>
        <position position="428"/>
    </location>
</feature>
<feature type="mutagenesis site" description="Almost no FGL2 transcription." evidence="6">
    <original>G</original>
    <variation>S</variation>
    <location>
        <position position="12"/>
    </location>
</feature>
<feature type="mutagenesis site" description="Almost no FGL2 transcription." evidence="6">
    <original>P</original>
    <variation>L</variation>
    <location>
        <position position="38"/>
    </location>
</feature>
<feature type="mutagenesis site" description="Almost no FGL2 transcription." evidence="6">
    <location>
        <position position="38"/>
    </location>
</feature>
<feature type="mutagenesis site" description="Almost no FGL2 transcription." evidence="6">
    <location>
        <begin position="40"/>
        <end position="42"/>
    </location>
</feature>
<feature type="mutagenesis site" description="No effect on FGL2 transcription." evidence="6">
    <original>E</original>
    <variation>Q</variation>
    <location>
        <position position="85"/>
    </location>
</feature>
<feature type="mutagenesis site" description="No effect on FGL2 transcription." evidence="6">
    <original>V</original>
    <variation>A</variation>
    <location>
        <position position="321"/>
    </location>
</feature>
<accession>P18447</accession>
<reference key="1">
    <citation type="journal article" date="1990" name="Virology">
        <title>Sequence comparison of the N genes of five strains of the coronavirus mouse hepatitis virus suggests a three domain structure for the nucleocapsid protein.</title>
        <authorList>
            <person name="Parker M.M."/>
            <person name="Masters P.S."/>
        </authorList>
    </citation>
    <scope>NUCLEOTIDE SEQUENCE [GENOMIC RNA]</scope>
</reference>
<reference key="2">
    <citation type="journal article" date="2003" name="J. Biol. Chem.">
        <title>Induction of prothrombinase fgl2 by the nucleocapsid protein of virulent mouse hepatitis virus is dependent on host hepatic nuclear factor-4 alpha.</title>
        <authorList>
            <person name="Ning Q."/>
            <person name="Lakatoo S."/>
            <person name="Liu M."/>
            <person name="Yang W."/>
            <person name="Wang Z."/>
            <person name="Phillips M.J."/>
            <person name="Levy G.A."/>
        </authorList>
    </citation>
    <scope>MUTAGENESIS</scope>
    <scope>FUNCTION</scope>
</reference>
<name>NCAP_CVM3</name>
<dbReference type="EMBL" id="M35254">
    <property type="protein sequence ID" value="AAA46444.1"/>
    <property type="molecule type" value="Genomic_RNA"/>
</dbReference>
<dbReference type="PIR" id="B45340">
    <property type="entry name" value="B45340"/>
</dbReference>
<dbReference type="BMRB" id="P18447"/>
<dbReference type="SMR" id="P18447"/>
<dbReference type="GO" id="GO:0044172">
    <property type="term" value="C:host cell endoplasmic reticulum-Golgi intermediate compartment"/>
    <property type="evidence" value="ECO:0007669"/>
    <property type="project" value="UniProtKB-SubCell"/>
</dbReference>
<dbReference type="GO" id="GO:0044177">
    <property type="term" value="C:host cell Golgi apparatus"/>
    <property type="evidence" value="ECO:0007669"/>
    <property type="project" value="UniProtKB-SubCell"/>
</dbReference>
<dbReference type="GO" id="GO:1990904">
    <property type="term" value="C:ribonucleoprotein complex"/>
    <property type="evidence" value="ECO:0007669"/>
    <property type="project" value="UniProtKB-KW"/>
</dbReference>
<dbReference type="GO" id="GO:0019013">
    <property type="term" value="C:viral nucleocapsid"/>
    <property type="evidence" value="ECO:0007669"/>
    <property type="project" value="UniProtKB-UniRule"/>
</dbReference>
<dbReference type="GO" id="GO:0003723">
    <property type="term" value="F:RNA binding"/>
    <property type="evidence" value="ECO:0007669"/>
    <property type="project" value="UniProtKB-UniRule"/>
</dbReference>
<dbReference type="CDD" id="cd21595">
    <property type="entry name" value="CoV_N-CTD"/>
    <property type="match status" value="1"/>
</dbReference>
<dbReference type="CDD" id="cd21554">
    <property type="entry name" value="CoV_N-NTD"/>
    <property type="match status" value="1"/>
</dbReference>
<dbReference type="HAMAP" id="MF_04096">
    <property type="entry name" value="BETA_CORONA_NCAP"/>
    <property type="match status" value="1"/>
</dbReference>
<dbReference type="InterPro" id="IPR044344">
    <property type="entry name" value="N_prot_C_CoV"/>
</dbReference>
<dbReference type="InterPro" id="IPR044345">
    <property type="entry name" value="N_prot_N_CoV"/>
</dbReference>
<dbReference type="InterPro" id="IPR043505">
    <property type="entry name" value="NCAP_bCoV"/>
</dbReference>
<dbReference type="InterPro" id="IPR001218">
    <property type="entry name" value="Nucleocap_CoV"/>
</dbReference>
<dbReference type="InterPro" id="IPR037179">
    <property type="entry name" value="Nucleocapsid_C"/>
</dbReference>
<dbReference type="InterPro" id="IPR037195">
    <property type="entry name" value="Nucleocapsid_N"/>
</dbReference>
<dbReference type="Pfam" id="PF00937">
    <property type="entry name" value="CoV_nucleocap"/>
    <property type="match status" value="1"/>
</dbReference>
<dbReference type="PIRSF" id="PIRSF003888">
    <property type="entry name" value="Corona_nucleocap"/>
    <property type="match status" value="1"/>
</dbReference>
<dbReference type="SUPFAM" id="SSF110304">
    <property type="entry name" value="Coronavirus RNA-binding domain"/>
    <property type="match status" value="1"/>
</dbReference>
<dbReference type="SUPFAM" id="SSF103068">
    <property type="entry name" value="Nucleocapsid protein dimerization domain"/>
    <property type="match status" value="1"/>
</dbReference>
<dbReference type="PROSITE" id="PS51929">
    <property type="entry name" value="COV_N_CTD"/>
    <property type="match status" value="1"/>
</dbReference>
<dbReference type="PROSITE" id="PS51928">
    <property type="entry name" value="COV_N_NTD"/>
    <property type="match status" value="1"/>
</dbReference>
<protein>
    <recommendedName>
        <fullName evidence="2">Nucleoprotein</fullName>
    </recommendedName>
    <alternativeName>
        <fullName evidence="2">Nucleocapsid protein</fullName>
        <shortName evidence="2">NC</shortName>
        <shortName evidence="2">Protein N</shortName>
    </alternativeName>
</protein>
<organism>
    <name type="scientific">Murine coronavirus (strain 3)</name>
    <name type="common">MHV-3</name>
    <name type="synonym">Murine hepatitis virus</name>
    <dbReference type="NCBI Taxonomy" id="11140"/>
    <lineage>
        <taxon>Viruses</taxon>
        <taxon>Riboviria</taxon>
        <taxon>Orthornavirae</taxon>
        <taxon>Pisuviricota</taxon>
        <taxon>Pisoniviricetes</taxon>
        <taxon>Nidovirales</taxon>
        <taxon>Cornidovirineae</taxon>
        <taxon>Coronaviridae</taxon>
        <taxon>Orthocoronavirinae</taxon>
        <taxon>Betacoronavirus</taxon>
        <taxon>Embecovirus</taxon>
        <taxon>Murine coronavirus</taxon>
    </lineage>
</organism>
<evidence type="ECO:0000250" key="1">
    <source>
        <dbReference type="UniProtKB" id="P0DTC9"/>
    </source>
</evidence>
<evidence type="ECO:0000255" key="2">
    <source>
        <dbReference type="HAMAP-Rule" id="MF_04096"/>
    </source>
</evidence>
<evidence type="ECO:0000255" key="3">
    <source>
        <dbReference type="PROSITE-ProRule" id="PRU01276"/>
    </source>
</evidence>
<evidence type="ECO:0000255" key="4">
    <source>
        <dbReference type="PROSITE-ProRule" id="PRU01277"/>
    </source>
</evidence>
<evidence type="ECO:0000256" key="5">
    <source>
        <dbReference type="SAM" id="MobiDB-lite"/>
    </source>
</evidence>
<evidence type="ECO:0000269" key="6">
    <source>
    </source>
</evidence>
<comment type="function">
    <text evidence="6">Major structural component of virions that associates with genomic RNA to form a long, flexible, helical nucleocapsid. Interaction with the M protein leads to the formation of virus particles. Binds to cellular membranes and phospholipids. Elicits cell-mediated immunity. May play roles in viral transcription and translation, and/or replication. Induces transcription of the prothrombinase (FGL2) and elevates procoagulant activity.</text>
</comment>
<comment type="function">
    <text evidence="2">Packages the positive strand viral genome RNA into a helical ribonucleocapsid (RNP) and plays a fundamental role during virion assembly through its interactions with the viral genome and membrane protein M. Plays an important role in enhancing the efficiency of subgenomic viral RNA transcription as well as viral replication.</text>
</comment>
<comment type="subunit">
    <text evidence="2">Homooligomer. Both monomeric and oligomeric forms interact with RNA. Interacts with protein M. Interacts with NSP3; this interaction serves to tether the genome to the newly translated replicase-transcriptase complex at a very early stage of infection.</text>
</comment>
<comment type="subcellular location">
    <subcellularLocation>
        <location evidence="2">Virion</location>
    </subcellularLocation>
    <subcellularLocation>
        <location evidence="2">Host endoplasmic reticulum-Golgi intermediate compartment</location>
    </subcellularLocation>
    <subcellularLocation>
        <location evidence="2">Host Golgi apparatus</location>
    </subcellularLocation>
    <text evidence="2">Located inside the virion, complexed with the viral RNA. Probably associates with ER-derived membranes where it participates in viral RNA synthesis and virus budding.</text>
</comment>
<comment type="PTM">
    <text evidence="2">ADP-ribosylated. The ADP-ribosylation is retained in the virion during infection.</text>
</comment>
<comment type="PTM">
    <text evidence="2">Phosphorylated on serine and threonine residues.</text>
</comment>
<comment type="similarity">
    <text evidence="2">Belongs to the betacoronavirus nucleocapsid protein family.</text>
</comment>